<sequence length="514" mass="52732">MKRCALLTPLLPLALACNNPNDPAHSCASIYSVSSDEAASFCATFTASVVSEPTGVPDAFLSACDSKIKHLSSACSCLGPVDSATATPVPATSTVPASVPVITTSTATATPSRIPVFVPSSSSSSAVVTFKTQIKSSSPGPSSSFAAAATTEAPTSTRASPYTPYTGNGGTTCTVTDYAGISSAVASCSNIMLSDVYAPPSSTIDLQDLQTGAAVIFAGKTTFGDTSDSDFDPIVISGTNLTITGTEDHVIDGNGQAYWDGQGSNGGSDKPDHFIVLKHVYNSVVANLNIQNWPVHCFDIENTESLTLTGITLDNSAGDEPNDSSDGDPAAHNSDGFDIKSSTDLILKDSNVYNQDDCVAITSGTNITVDNMYCSGGHGLSIGSIGGKSDNTVDGVVFSNSQVVNSQNGCRIKTNEGETGEVSNIKYENISLSGISKYGIVVQQDYLNGGPTGEPSNGVSITNVEFTDVTGTMSGGKDYYILCGDGSCENFTFSGVSITGGSDDSCNYPDSGCP</sequence>
<dbReference type="EC" id="3.2.1.15"/>
<dbReference type="EMBL" id="AACD01000110">
    <property type="protein sequence ID" value="EAA58185.1"/>
    <property type="molecule type" value="Genomic_DNA"/>
</dbReference>
<dbReference type="EMBL" id="BN001301">
    <property type="protein sequence ID" value="CBF71186.1"/>
    <property type="molecule type" value="Genomic_DNA"/>
</dbReference>
<dbReference type="RefSeq" id="XP_664260.1">
    <property type="nucleotide sequence ID" value="XM_659168.1"/>
</dbReference>
<dbReference type="SMR" id="Q5AYH4"/>
<dbReference type="STRING" id="227321.Q5AYH4"/>
<dbReference type="CAZy" id="GH28">
    <property type="family name" value="Glycoside Hydrolase Family 28"/>
</dbReference>
<dbReference type="GlyCosmos" id="Q5AYH4">
    <property type="glycosylation" value="5 sites, No reported glycans"/>
</dbReference>
<dbReference type="EnsemblFungi" id="CBF71186">
    <property type="protein sequence ID" value="CBF71186"/>
    <property type="gene ID" value="ANIA_06656"/>
</dbReference>
<dbReference type="KEGG" id="ani:ANIA_06656"/>
<dbReference type="VEuPathDB" id="FungiDB:AN6656"/>
<dbReference type="eggNOG" id="ENOG502QW1P">
    <property type="taxonomic scope" value="Eukaryota"/>
</dbReference>
<dbReference type="HOGENOM" id="CLU_040116_0_0_1"/>
<dbReference type="InParanoid" id="Q5AYH4"/>
<dbReference type="OMA" id="SGDSCNY"/>
<dbReference type="OrthoDB" id="1546079at2759"/>
<dbReference type="Proteomes" id="UP000000560">
    <property type="component" value="Chromosome I"/>
</dbReference>
<dbReference type="GO" id="GO:0005576">
    <property type="term" value="C:extracellular region"/>
    <property type="evidence" value="ECO:0000250"/>
    <property type="project" value="UniProtKB"/>
</dbReference>
<dbReference type="GO" id="GO:0004650">
    <property type="term" value="F:polygalacturonase activity"/>
    <property type="evidence" value="ECO:0000250"/>
    <property type="project" value="UniProtKB"/>
</dbReference>
<dbReference type="GO" id="GO:0071555">
    <property type="term" value="P:cell wall organization"/>
    <property type="evidence" value="ECO:0007669"/>
    <property type="project" value="UniProtKB-KW"/>
</dbReference>
<dbReference type="GO" id="GO:0045490">
    <property type="term" value="P:pectin catabolic process"/>
    <property type="evidence" value="ECO:0000250"/>
    <property type="project" value="UniProtKB"/>
</dbReference>
<dbReference type="FunFam" id="2.160.20.10:FF:000002">
    <property type="entry name" value="Endopolygalacturonase D"/>
    <property type="match status" value="1"/>
</dbReference>
<dbReference type="Gene3D" id="2.160.20.10">
    <property type="entry name" value="Single-stranded right-handed beta-helix, Pectin lyase-like"/>
    <property type="match status" value="1"/>
</dbReference>
<dbReference type="InterPro" id="IPR000743">
    <property type="entry name" value="Glyco_hydro_28"/>
</dbReference>
<dbReference type="InterPro" id="IPR050434">
    <property type="entry name" value="Glycosyl_hydrlase_28"/>
</dbReference>
<dbReference type="InterPro" id="IPR006626">
    <property type="entry name" value="PbH1"/>
</dbReference>
<dbReference type="InterPro" id="IPR012334">
    <property type="entry name" value="Pectin_lyas_fold"/>
</dbReference>
<dbReference type="InterPro" id="IPR011050">
    <property type="entry name" value="Pectin_lyase_fold/virulence"/>
</dbReference>
<dbReference type="PANTHER" id="PTHR31884:SF9">
    <property type="entry name" value="ENDOPOLYGALACTURONASE D-RELATED"/>
    <property type="match status" value="1"/>
</dbReference>
<dbReference type="PANTHER" id="PTHR31884">
    <property type="entry name" value="POLYGALACTURONASE"/>
    <property type="match status" value="1"/>
</dbReference>
<dbReference type="Pfam" id="PF00295">
    <property type="entry name" value="Glyco_hydro_28"/>
    <property type="match status" value="1"/>
</dbReference>
<dbReference type="SMART" id="SM00710">
    <property type="entry name" value="PbH1"/>
    <property type="match status" value="7"/>
</dbReference>
<dbReference type="SUPFAM" id="SSF51126">
    <property type="entry name" value="Pectin lyase-like"/>
    <property type="match status" value="1"/>
</dbReference>
<dbReference type="PROSITE" id="PS00502">
    <property type="entry name" value="POLYGALACTURONASE"/>
    <property type="match status" value="1"/>
</dbReference>
<keyword id="KW-0961">Cell wall biogenesis/degradation</keyword>
<keyword id="KW-1015">Disulfide bond</keyword>
<keyword id="KW-0325">Glycoprotein</keyword>
<keyword id="KW-0326">Glycosidase</keyword>
<keyword id="KW-0378">Hydrolase</keyword>
<keyword id="KW-1185">Reference proteome</keyword>
<keyword id="KW-0677">Repeat</keyword>
<keyword id="KW-0964">Secreted</keyword>
<keyword id="KW-0732">Signal</keyword>
<feature type="signal peptide" evidence="2">
    <location>
        <begin position="1"/>
        <end position="16"/>
    </location>
</feature>
<feature type="chain" id="PRO_0000393663" description="Probable endopolygalacturonase D">
    <location>
        <begin position="17"/>
        <end position="514"/>
    </location>
</feature>
<feature type="repeat" description="PbH1 1">
    <location>
        <begin position="280"/>
        <end position="302"/>
    </location>
</feature>
<feature type="repeat" description="PbH1 2">
    <location>
        <begin position="303"/>
        <end position="341"/>
    </location>
</feature>
<feature type="repeat" description="PbH1 3">
    <location>
        <begin position="342"/>
        <end position="363"/>
    </location>
</feature>
<feature type="repeat" description="PbH1 4">
    <location>
        <begin position="364"/>
        <end position="384"/>
    </location>
</feature>
<feature type="repeat" description="PbH1 5">
    <location>
        <begin position="393"/>
        <end position="414"/>
    </location>
</feature>
<feature type="repeat" description="PbH1 6">
    <location>
        <begin position="422"/>
        <end position="444"/>
    </location>
</feature>
<feature type="repeat" description="PbH1 7">
    <location>
        <begin position="456"/>
        <end position="500"/>
    </location>
</feature>
<feature type="region of interest" description="Disordered" evidence="4">
    <location>
        <begin position="134"/>
        <end position="166"/>
    </location>
</feature>
<feature type="region of interest" description="Disordered" evidence="4">
    <location>
        <begin position="312"/>
        <end position="335"/>
    </location>
</feature>
<feature type="compositionally biased region" description="Low complexity" evidence="4">
    <location>
        <begin position="136"/>
        <end position="166"/>
    </location>
</feature>
<feature type="active site" description="Proton donor" evidence="3">
    <location>
        <position position="356"/>
    </location>
</feature>
<feature type="active site" evidence="3">
    <location>
        <position position="378"/>
    </location>
</feature>
<feature type="glycosylation site" description="N-linked (GlcNAc...) asparagine" evidence="2">
    <location>
        <position position="240"/>
    </location>
</feature>
<feature type="glycosylation site" description="N-linked (GlcNAc...) asparagine" evidence="2">
    <location>
        <position position="322"/>
    </location>
</feature>
<feature type="glycosylation site" description="N-linked (GlcNAc...) asparagine" evidence="2">
    <location>
        <position position="366"/>
    </location>
</feature>
<feature type="glycosylation site" description="N-linked (GlcNAc...) asparagine" evidence="2">
    <location>
        <position position="429"/>
    </location>
</feature>
<feature type="glycosylation site" description="N-linked (GlcNAc...) asparagine" evidence="2">
    <location>
        <position position="490"/>
    </location>
</feature>
<feature type="disulfide bond" evidence="1">
    <location>
        <begin position="173"/>
        <end position="188"/>
    </location>
</feature>
<feature type="disulfide bond" evidence="1">
    <location>
        <begin position="358"/>
        <end position="374"/>
    </location>
</feature>
<feature type="disulfide bond" evidence="1">
    <location>
        <begin position="483"/>
        <end position="488"/>
    </location>
</feature>
<feature type="disulfide bond" evidence="1">
    <location>
        <begin position="506"/>
        <end position="513"/>
    </location>
</feature>
<proteinExistence type="inferred from homology"/>
<name>PGLRD_EMENI</name>
<comment type="function">
    <text evidence="1">Involved in maceration and soft-rotting of plant tissue. Hydrolyzes the 1,4-alpha glycosidic bonds of de-esterified pectate in the smooth region of the plant cell wall (By similarity).</text>
</comment>
<comment type="catalytic activity">
    <reaction>
        <text>(1,4-alpha-D-galacturonosyl)n+m + H2O = (1,4-alpha-D-galacturonosyl)n + (1,4-alpha-D-galacturonosyl)m.</text>
        <dbReference type="EC" id="3.2.1.15"/>
    </reaction>
</comment>
<comment type="subcellular location">
    <subcellularLocation>
        <location evidence="1">Secreted</location>
    </subcellularLocation>
</comment>
<comment type="similarity">
    <text evidence="5">Belongs to the glycosyl hydrolase 28 family.</text>
</comment>
<gene>
    <name type="primary">pgaD</name>
    <name type="ORF">AN6656</name>
</gene>
<reference key="1">
    <citation type="journal article" date="2005" name="Nature">
        <title>Sequencing of Aspergillus nidulans and comparative analysis with A. fumigatus and A. oryzae.</title>
        <authorList>
            <person name="Galagan J.E."/>
            <person name="Calvo S.E."/>
            <person name="Cuomo C."/>
            <person name="Ma L.-J."/>
            <person name="Wortman J.R."/>
            <person name="Batzoglou S."/>
            <person name="Lee S.-I."/>
            <person name="Bastuerkmen M."/>
            <person name="Spevak C.C."/>
            <person name="Clutterbuck J."/>
            <person name="Kapitonov V."/>
            <person name="Jurka J."/>
            <person name="Scazzocchio C."/>
            <person name="Farman M.L."/>
            <person name="Butler J."/>
            <person name="Purcell S."/>
            <person name="Harris S."/>
            <person name="Braus G.H."/>
            <person name="Draht O."/>
            <person name="Busch S."/>
            <person name="D'Enfert C."/>
            <person name="Bouchier C."/>
            <person name="Goldman G.H."/>
            <person name="Bell-Pedersen D."/>
            <person name="Griffiths-Jones S."/>
            <person name="Doonan J.H."/>
            <person name="Yu J."/>
            <person name="Vienken K."/>
            <person name="Pain A."/>
            <person name="Freitag M."/>
            <person name="Selker E.U."/>
            <person name="Archer D.B."/>
            <person name="Penalva M.A."/>
            <person name="Oakley B.R."/>
            <person name="Momany M."/>
            <person name="Tanaka T."/>
            <person name="Kumagai T."/>
            <person name="Asai K."/>
            <person name="Machida M."/>
            <person name="Nierman W.C."/>
            <person name="Denning D.W."/>
            <person name="Caddick M.X."/>
            <person name="Hynes M."/>
            <person name="Paoletti M."/>
            <person name="Fischer R."/>
            <person name="Miller B.L."/>
            <person name="Dyer P.S."/>
            <person name="Sachs M.S."/>
            <person name="Osmani S.A."/>
            <person name="Birren B.W."/>
        </authorList>
    </citation>
    <scope>NUCLEOTIDE SEQUENCE [LARGE SCALE GENOMIC DNA]</scope>
    <source>
        <strain>FGSC A4 / ATCC 38163 / CBS 112.46 / NRRL 194 / M139</strain>
    </source>
</reference>
<reference key="2">
    <citation type="journal article" date="2009" name="Fungal Genet. Biol.">
        <title>The 2008 update of the Aspergillus nidulans genome annotation: a community effort.</title>
        <authorList>
            <person name="Wortman J.R."/>
            <person name="Gilsenan J.M."/>
            <person name="Joardar V."/>
            <person name="Deegan J."/>
            <person name="Clutterbuck J."/>
            <person name="Andersen M.R."/>
            <person name="Archer D."/>
            <person name="Bencina M."/>
            <person name="Braus G."/>
            <person name="Coutinho P."/>
            <person name="von Dohren H."/>
            <person name="Doonan J."/>
            <person name="Driessen A.J."/>
            <person name="Durek P."/>
            <person name="Espeso E."/>
            <person name="Fekete E."/>
            <person name="Flipphi M."/>
            <person name="Estrada C.G."/>
            <person name="Geysens S."/>
            <person name="Goldman G."/>
            <person name="de Groot P.W."/>
            <person name="Hansen K."/>
            <person name="Harris S.D."/>
            <person name="Heinekamp T."/>
            <person name="Helmstaedt K."/>
            <person name="Henrissat B."/>
            <person name="Hofmann G."/>
            <person name="Homan T."/>
            <person name="Horio T."/>
            <person name="Horiuchi H."/>
            <person name="James S."/>
            <person name="Jones M."/>
            <person name="Karaffa L."/>
            <person name="Karanyi Z."/>
            <person name="Kato M."/>
            <person name="Keller N."/>
            <person name="Kelly D.E."/>
            <person name="Kiel J.A."/>
            <person name="Kim J.M."/>
            <person name="van der Klei I.J."/>
            <person name="Klis F.M."/>
            <person name="Kovalchuk A."/>
            <person name="Krasevec N."/>
            <person name="Kubicek C.P."/>
            <person name="Liu B."/>
            <person name="Maccabe A."/>
            <person name="Meyer V."/>
            <person name="Mirabito P."/>
            <person name="Miskei M."/>
            <person name="Mos M."/>
            <person name="Mullins J."/>
            <person name="Nelson D.R."/>
            <person name="Nielsen J."/>
            <person name="Oakley B.R."/>
            <person name="Osmani S.A."/>
            <person name="Pakula T."/>
            <person name="Paszewski A."/>
            <person name="Paulsen I."/>
            <person name="Pilsyk S."/>
            <person name="Pocsi I."/>
            <person name="Punt P.J."/>
            <person name="Ram A.F."/>
            <person name="Ren Q."/>
            <person name="Robellet X."/>
            <person name="Robson G."/>
            <person name="Seiboth B."/>
            <person name="van Solingen P."/>
            <person name="Specht T."/>
            <person name="Sun J."/>
            <person name="Taheri-Talesh N."/>
            <person name="Takeshita N."/>
            <person name="Ussery D."/>
            <person name="vanKuyk P.A."/>
            <person name="Visser H."/>
            <person name="van de Vondervoort P.J."/>
            <person name="de Vries R.P."/>
            <person name="Walton J."/>
            <person name="Xiang X."/>
            <person name="Xiong Y."/>
            <person name="Zeng A.P."/>
            <person name="Brandt B.W."/>
            <person name="Cornell M.J."/>
            <person name="van den Hondel C.A."/>
            <person name="Visser J."/>
            <person name="Oliver S.G."/>
            <person name="Turner G."/>
        </authorList>
    </citation>
    <scope>GENOME REANNOTATION</scope>
    <source>
        <strain>FGSC A4 / ATCC 38163 / CBS 112.46 / NRRL 194 / M139</strain>
    </source>
</reference>
<accession>Q5AYH4</accession>
<accession>C8V1E3</accession>
<organism>
    <name type="scientific">Emericella nidulans (strain FGSC A4 / ATCC 38163 / CBS 112.46 / NRRL 194 / M139)</name>
    <name type="common">Aspergillus nidulans</name>
    <dbReference type="NCBI Taxonomy" id="227321"/>
    <lineage>
        <taxon>Eukaryota</taxon>
        <taxon>Fungi</taxon>
        <taxon>Dikarya</taxon>
        <taxon>Ascomycota</taxon>
        <taxon>Pezizomycotina</taxon>
        <taxon>Eurotiomycetes</taxon>
        <taxon>Eurotiomycetidae</taxon>
        <taxon>Eurotiales</taxon>
        <taxon>Aspergillaceae</taxon>
        <taxon>Aspergillus</taxon>
        <taxon>Aspergillus subgen. Nidulantes</taxon>
    </lineage>
</organism>
<protein>
    <recommendedName>
        <fullName>Probable endopolygalacturonase D</fullName>
        <shortName>PGD</shortName>
        <ecNumber>3.2.1.15</ecNumber>
    </recommendedName>
    <alternativeName>
        <fullName>Pectinase D</fullName>
    </alternativeName>
    <alternativeName>
        <fullName>Polygalacturonase D</fullName>
    </alternativeName>
</protein>
<evidence type="ECO:0000250" key="1"/>
<evidence type="ECO:0000255" key="2"/>
<evidence type="ECO:0000255" key="3">
    <source>
        <dbReference type="PROSITE-ProRule" id="PRU10052"/>
    </source>
</evidence>
<evidence type="ECO:0000256" key="4">
    <source>
        <dbReference type="SAM" id="MobiDB-lite"/>
    </source>
</evidence>
<evidence type="ECO:0000305" key="5"/>